<organism>
    <name type="scientific">Dictyostelium discoideum</name>
    <name type="common">Social amoeba</name>
    <dbReference type="NCBI Taxonomy" id="44689"/>
    <lineage>
        <taxon>Eukaryota</taxon>
        <taxon>Amoebozoa</taxon>
        <taxon>Evosea</taxon>
        <taxon>Eumycetozoa</taxon>
        <taxon>Dictyostelia</taxon>
        <taxon>Dictyosteliales</taxon>
        <taxon>Dictyosteliaceae</taxon>
        <taxon>Dictyostelium</taxon>
    </lineage>
</organism>
<protein>
    <recommendedName>
        <fullName>Uncharacterized protein DDB_G0292662</fullName>
    </recommendedName>
</protein>
<reference key="1">
    <citation type="journal article" date="2005" name="Nature">
        <title>The genome of the social amoeba Dictyostelium discoideum.</title>
        <authorList>
            <person name="Eichinger L."/>
            <person name="Pachebat J.A."/>
            <person name="Gloeckner G."/>
            <person name="Rajandream M.A."/>
            <person name="Sucgang R."/>
            <person name="Berriman M."/>
            <person name="Song J."/>
            <person name="Olsen R."/>
            <person name="Szafranski K."/>
            <person name="Xu Q."/>
            <person name="Tunggal B."/>
            <person name="Kummerfeld S."/>
            <person name="Madera M."/>
            <person name="Konfortov B.A."/>
            <person name="Rivero F."/>
            <person name="Bankier A.T."/>
            <person name="Lehmann R."/>
            <person name="Hamlin N."/>
            <person name="Davies R."/>
            <person name="Gaudet P."/>
            <person name="Fey P."/>
            <person name="Pilcher K."/>
            <person name="Chen G."/>
            <person name="Saunders D."/>
            <person name="Sodergren E.J."/>
            <person name="Davis P."/>
            <person name="Kerhornou A."/>
            <person name="Nie X."/>
            <person name="Hall N."/>
            <person name="Anjard C."/>
            <person name="Hemphill L."/>
            <person name="Bason N."/>
            <person name="Farbrother P."/>
            <person name="Desany B."/>
            <person name="Just E."/>
            <person name="Morio T."/>
            <person name="Rost R."/>
            <person name="Churcher C.M."/>
            <person name="Cooper J."/>
            <person name="Haydock S."/>
            <person name="van Driessche N."/>
            <person name="Cronin A."/>
            <person name="Goodhead I."/>
            <person name="Muzny D.M."/>
            <person name="Mourier T."/>
            <person name="Pain A."/>
            <person name="Lu M."/>
            <person name="Harper D."/>
            <person name="Lindsay R."/>
            <person name="Hauser H."/>
            <person name="James K.D."/>
            <person name="Quiles M."/>
            <person name="Madan Babu M."/>
            <person name="Saito T."/>
            <person name="Buchrieser C."/>
            <person name="Wardroper A."/>
            <person name="Felder M."/>
            <person name="Thangavelu M."/>
            <person name="Johnson D."/>
            <person name="Knights A."/>
            <person name="Loulseged H."/>
            <person name="Mungall K.L."/>
            <person name="Oliver K."/>
            <person name="Price C."/>
            <person name="Quail M.A."/>
            <person name="Urushihara H."/>
            <person name="Hernandez J."/>
            <person name="Rabbinowitsch E."/>
            <person name="Steffen D."/>
            <person name="Sanders M."/>
            <person name="Ma J."/>
            <person name="Kohara Y."/>
            <person name="Sharp S."/>
            <person name="Simmonds M.N."/>
            <person name="Spiegler S."/>
            <person name="Tivey A."/>
            <person name="Sugano S."/>
            <person name="White B."/>
            <person name="Walker D."/>
            <person name="Woodward J.R."/>
            <person name="Winckler T."/>
            <person name="Tanaka Y."/>
            <person name="Shaulsky G."/>
            <person name="Schleicher M."/>
            <person name="Weinstock G.M."/>
            <person name="Rosenthal A."/>
            <person name="Cox E.C."/>
            <person name="Chisholm R.L."/>
            <person name="Gibbs R.A."/>
            <person name="Loomis W.F."/>
            <person name="Platzer M."/>
            <person name="Kay R.R."/>
            <person name="Williams J.G."/>
            <person name="Dear P.H."/>
            <person name="Noegel A.A."/>
            <person name="Barrell B.G."/>
            <person name="Kuspa A."/>
        </authorList>
    </citation>
    <scope>NUCLEOTIDE SEQUENCE [LARGE SCALE GENOMIC DNA]</scope>
    <source>
        <strain>AX4</strain>
    </source>
</reference>
<keyword id="KW-1185">Reference proteome</keyword>
<evidence type="ECO:0000256" key="1">
    <source>
        <dbReference type="SAM" id="MobiDB-lite"/>
    </source>
</evidence>
<sequence>MSYTNTKEETQIINIENNDIKKRKFIENNNTNNNTNSNTNSNNKNNNNNNNNKSNNKKQNNNNKKPRLKFTYDYNYKIISPFQKFLDYGICPTLNELYSEFYHILNENKCQKLKMELDELKKMNKGDKPIPIDFDPSKICHQHSKEDIEQIIFDPNDRHLIELAVRKFCGFLQKESNMVLMEMIILSIGLLKSIEFLHFTLEIERDGGIFTTVIPKSSPNTTTTTTSTTTTTTTIINDDNTLITTKDSNEQTSSSSSSSTAITTNTNCSNSKSSSQPITRRRTPGGVFYKLINLHIPTEFKSNLFSISSLFKYKNERKKKGFGTLLDLKDKLLDFTSNNSNGNNDNNENSQEQINSKKFNKLLNEVDEEFDKLCVSSKNEIMT</sequence>
<name>Y4510_DICDI</name>
<proteinExistence type="predicted"/>
<gene>
    <name type="ORF">DDB_G0292662</name>
</gene>
<feature type="chain" id="PRO_0000344417" description="Uncharacterized protein DDB_G0292662">
    <location>
        <begin position="1"/>
        <end position="383"/>
    </location>
</feature>
<feature type="region of interest" description="Disordered" evidence="1">
    <location>
        <begin position="27"/>
        <end position="66"/>
    </location>
</feature>
<feature type="region of interest" description="Disordered" evidence="1">
    <location>
        <begin position="242"/>
        <end position="281"/>
    </location>
</feature>
<feature type="compositionally biased region" description="Low complexity" evidence="1">
    <location>
        <begin position="28"/>
        <end position="63"/>
    </location>
</feature>
<feature type="compositionally biased region" description="Low complexity" evidence="1">
    <location>
        <begin position="242"/>
        <end position="275"/>
    </location>
</feature>
<dbReference type="EMBL" id="AAFI02000194">
    <property type="protein sequence ID" value="EAL61134.1"/>
    <property type="molecule type" value="Genomic_DNA"/>
</dbReference>
<dbReference type="RefSeq" id="XP_629558.1">
    <property type="nucleotide sequence ID" value="XM_629556.1"/>
</dbReference>
<dbReference type="FunCoup" id="Q54CW2">
    <property type="interactions" value="744"/>
</dbReference>
<dbReference type="PaxDb" id="44689-DDB0184510"/>
<dbReference type="EnsemblProtists" id="EAL61134">
    <property type="protein sequence ID" value="EAL61134"/>
    <property type="gene ID" value="DDB_G0292662"/>
</dbReference>
<dbReference type="GeneID" id="8628817"/>
<dbReference type="KEGG" id="ddi:DDB_G0292662"/>
<dbReference type="dictyBase" id="DDB_G0292662"/>
<dbReference type="VEuPathDB" id="AmoebaDB:DDB_G0292662"/>
<dbReference type="eggNOG" id="ENOG502RH6B">
    <property type="taxonomic scope" value="Eukaryota"/>
</dbReference>
<dbReference type="HOGENOM" id="CLU_722453_0_0_1"/>
<dbReference type="InParanoid" id="Q54CW2"/>
<dbReference type="OMA" id="IVRKICG"/>
<dbReference type="PRO" id="PR:Q54CW2"/>
<dbReference type="Proteomes" id="UP000002195">
    <property type="component" value="Chromosome 6"/>
</dbReference>
<dbReference type="GO" id="GO:0006408">
    <property type="term" value="P:snRNA export from nucleus"/>
    <property type="evidence" value="ECO:0007669"/>
    <property type="project" value="InterPro"/>
</dbReference>
<dbReference type="Gene3D" id="1.10.10.1440">
    <property type="entry name" value="PHAX RNA-binding domain"/>
    <property type="match status" value="1"/>
</dbReference>
<dbReference type="InterPro" id="IPR039047">
    <property type="entry name" value="PHAX"/>
</dbReference>
<dbReference type="InterPro" id="IPR038092">
    <property type="entry name" value="PHAX_RNA-binding_sf"/>
</dbReference>
<dbReference type="PANTHER" id="PTHR13135">
    <property type="entry name" value="CYTOSOLIC RESINIFERATOXIN BINDING PROTEIN RBP-26"/>
    <property type="match status" value="1"/>
</dbReference>
<dbReference type="PANTHER" id="PTHR13135:SF0">
    <property type="entry name" value="PHOSPHORYLATED ADAPTER RNA EXPORT PROTEIN"/>
    <property type="match status" value="1"/>
</dbReference>
<accession>Q54CW2</accession>